<sequence length="75" mass="7722">MPNGVLGLGNPSRLAALYGLQLAHESQCCQMHNLPSAARQVTVACREEVGITTILAGRDECGVCDKTAGLDGAAP</sequence>
<keyword id="KW-1185">Reference proteome</keyword>
<proteinExistence type="predicted"/>
<reference key="1">
    <citation type="journal article" date="2003" name="Proc. Natl. Acad. Sci. U.S.A.">
        <title>The complete genome sequence of Mycobacterium bovis.</title>
        <authorList>
            <person name="Garnier T."/>
            <person name="Eiglmeier K."/>
            <person name="Camus J.-C."/>
            <person name="Medina N."/>
            <person name="Mansoor H."/>
            <person name="Pryor M."/>
            <person name="Duthoy S."/>
            <person name="Grondin S."/>
            <person name="Lacroix C."/>
            <person name="Monsempe C."/>
            <person name="Simon S."/>
            <person name="Harris B."/>
            <person name="Atkin R."/>
            <person name="Doggett J."/>
            <person name="Mayes R."/>
            <person name="Keating L."/>
            <person name="Wheeler P.R."/>
            <person name="Parkhill J."/>
            <person name="Barrell B.G."/>
            <person name="Cole S.T."/>
            <person name="Gordon S.V."/>
            <person name="Hewinson R.G."/>
        </authorList>
    </citation>
    <scope>NUCLEOTIDE SEQUENCE [LARGE SCALE GENOMIC DNA]</scope>
    <source>
        <strain>ATCC BAA-935 / AF2122/97</strain>
    </source>
</reference>
<reference key="2">
    <citation type="journal article" date="2017" name="Genome Announc.">
        <title>Updated reference genome sequence and annotation of Mycobacterium bovis AF2122/97.</title>
        <authorList>
            <person name="Malone K.M."/>
            <person name="Farrell D."/>
            <person name="Stuber T.P."/>
            <person name="Schubert O.T."/>
            <person name="Aebersold R."/>
            <person name="Robbe-Austerman S."/>
            <person name="Gordon S.V."/>
        </authorList>
    </citation>
    <scope>NUCLEOTIDE SEQUENCE [LARGE SCALE GENOMIC DNA]</scope>
    <scope>GENOME REANNOTATION</scope>
    <source>
        <strain>ATCC BAA-935 / AF2122/97</strain>
    </source>
</reference>
<name>Y1572_MYCBO</name>
<organism>
    <name type="scientific">Mycobacterium bovis (strain ATCC BAA-935 / AF2122/97)</name>
    <dbReference type="NCBI Taxonomy" id="233413"/>
    <lineage>
        <taxon>Bacteria</taxon>
        <taxon>Bacillati</taxon>
        <taxon>Actinomycetota</taxon>
        <taxon>Actinomycetes</taxon>
        <taxon>Mycobacteriales</taxon>
        <taxon>Mycobacteriaceae</taxon>
        <taxon>Mycobacterium</taxon>
        <taxon>Mycobacterium tuberculosis complex</taxon>
    </lineage>
</organism>
<dbReference type="EMBL" id="LT708304">
    <property type="protein sequence ID" value="SIU00175.1"/>
    <property type="molecule type" value="Genomic_DNA"/>
</dbReference>
<dbReference type="RefSeq" id="NP_855224.1">
    <property type="nucleotide sequence ID" value="NC_002945.3"/>
</dbReference>
<dbReference type="RefSeq" id="WP_003901194.1">
    <property type="nucleotide sequence ID" value="NC_002945.4"/>
</dbReference>
<dbReference type="KEGG" id="mbo:BQ2027_MB1572"/>
<dbReference type="PATRIC" id="fig|233413.5.peg.1718"/>
<dbReference type="Proteomes" id="UP000001419">
    <property type="component" value="Chromosome"/>
</dbReference>
<protein>
    <recommendedName>
        <fullName>Uncharacterized protein Mb1572</fullName>
    </recommendedName>
</protein>
<feature type="chain" id="PRO_0000103875" description="Uncharacterized protein Mb1572">
    <location>
        <begin position="1"/>
        <end position="75"/>
    </location>
</feature>
<gene>
    <name type="ordered locus">BQ2027_MB1572</name>
</gene>
<accession>P64872</accession>
<accession>A0A1R3XYL9</accession>
<accession>Q10781</accession>
<accession>X2BIN7</accession>